<gene>
    <name type="primary">GP</name>
</gene>
<organismHost>
    <name type="scientific">Apodemus agrarius</name>
    <name type="common">Eurasian field mouse</name>
    <dbReference type="NCBI Taxonomy" id="39030"/>
</organismHost>
<organismHost>
    <name type="scientific">Homo sapiens</name>
    <name type="common">Human</name>
    <dbReference type="NCBI Taxonomy" id="9606"/>
</organismHost>
<reference key="1">
    <citation type="journal article" date="1987" name="Virology">
        <title>Hantaan virus M RNA: coding strategy, nucleotide sequence, and gene order.</title>
        <authorList>
            <person name="Schmaljohn C.S."/>
            <person name="Schmaljohn A.L."/>
            <person name="Dalrymple J.M."/>
        </authorList>
    </citation>
    <scope>NUCLEOTIDE SEQUENCE [GENOMIC RNA]</scope>
</reference>
<reference key="2">
    <citation type="journal article" date="1987" name="Nucleic Acids Res.">
        <title>Nucleotide sequence of the M segment of the genomic RNA of Hantaan virus 76-118.</title>
        <authorList>
            <person name="Yoo D."/>
            <person name="Kang C.Y."/>
        </authorList>
    </citation>
    <scope>NUCLEOTIDE SEQUENCE [GENOMIC RNA]</scope>
</reference>
<reference key="3">
    <citation type="journal article" date="2001" name="Virology">
        <title>The Hantaan virus glycoprotein precursor is cleaved at the conserved pentapeptide WAASA.</title>
        <authorList>
            <person name="Loeber C."/>
            <person name="Anheier B."/>
            <person name="Lindow S."/>
            <person name="Klenk H.-D."/>
            <person name="Feldmann H."/>
        </authorList>
    </citation>
    <scope>CLEAVAGE BY SIGNAL PEPTIDASE (ENVELOPMENT POLYPROTEIN)</scope>
</reference>
<reference key="4">
    <citation type="journal article" date="2002" name="Virology">
        <title>Hantaan virus enters cells by clathrin-dependent receptor-mediated endocytosis.</title>
        <authorList>
            <person name="Jin M."/>
            <person name="Park J."/>
            <person name="Lee S."/>
            <person name="Park B."/>
            <person name="Shin J."/>
            <person name="Song K.J."/>
            <person name="Ahn T.I."/>
            <person name="Hwang S.Y."/>
            <person name="Ahn B.Y."/>
            <person name="Ahn K."/>
        </authorList>
    </citation>
    <scope>FUNCTION (GLYCOPROTEIN N)</scope>
</reference>
<reference key="5">
    <citation type="journal article" date="2014" name="Viruses">
        <title>Hantavirus Gn and Gc envelope glycoproteins: key structural units for virus cell entry and virus assembly.</title>
        <authorList>
            <person name="Cifuentes-Munoz N."/>
            <person name="Salazar-Quiroz N."/>
            <person name="Tischler N.D."/>
        </authorList>
    </citation>
    <scope>REVIEW</scope>
</reference>
<reference key="6">
    <citation type="journal article" date="2004" name="J. Virol.">
        <title>Cell fusion activities of Hantaan virus envelope glycoproteins.</title>
        <authorList>
            <person name="Ogino M."/>
            <person name="Yoshimatsu K."/>
            <person name="Ebihara H."/>
            <person name="Araki K."/>
            <person name="Lee B.H."/>
            <person name="Okumura M."/>
            <person name="Arikawa J."/>
        </authorList>
    </citation>
    <scope>FUNCTION (GLYCOPROTEIN C)</scope>
    <scope>SUBCELLULAR LOCATION (GLYCOPROTEIN N)</scope>
    <scope>SUBCELLULAR LOCATION (GLYCOPROTEIN C)</scope>
</reference>
<reference key="7">
    <citation type="journal article" date="2005" name="Proc. Natl. Acad. Sci. U.S.A.">
        <title>Pathogenic hantaviruses bind plexin-semaphorin-integrin domains present at the apex of inactive, bent alphavbeta3 integrin conformers.</title>
        <authorList>
            <person name="Raymond T."/>
            <person name="Gorbunova E."/>
            <person name="Gavrilovskaya I.N."/>
            <person name="Mackow E.R."/>
        </authorList>
    </citation>
    <scope>FUNCTION (GLYCOPROTEIN N)</scope>
    <scope>FUNCTION (GLYCOPROTEIN C)</scope>
</reference>
<reference key="8">
    <citation type="journal article" date="2006" name="Biochem. Biophys. Res. Commun.">
        <title>Cellular entry of Hantaan virus A9 strain: specific interactions with beta3 integrins and a novel 70kDa protein.</title>
        <authorList>
            <person name="Mou D.L."/>
            <person name="Wang Y.P."/>
            <person name="Huang C.X."/>
            <person name="Li G.Y."/>
            <person name="Pan L."/>
            <person name="Yang W.S."/>
            <person name="Bai X.F."/>
        </authorList>
    </citation>
    <scope>FUNCTION (GLYCOPROTEIN N)</scope>
    <scope>FUNCTION (GLYCOPROTEIN C)</scope>
</reference>
<reference key="9">
    <citation type="journal article" date="2008" name="Virology">
        <title>A hantavirus causing hemorrhagic fever with renal syndrome requires gC1qR/p32 for efficient cell binding and infection.</title>
        <authorList>
            <person name="Choi Y."/>
            <person name="Kwon Y.C."/>
            <person name="Kim S.I."/>
            <person name="Park J.M."/>
            <person name="Lee K.H."/>
            <person name="Ahn B.Y."/>
        </authorList>
    </citation>
    <scope>FUNCTION (GLYCOPROTEIN N)</scope>
    <scope>FUNCTION (GLYCOPROTEIN C)</scope>
</reference>
<reference key="10">
    <citation type="journal article" date="2013" name="Virus Res.">
        <title>Role of nucleocapsid protein of hantaviruses in intracellular traffic of viral glycoproteins.</title>
        <authorList>
            <person name="Shimizu K."/>
            <person name="Yoshimatsu K."/>
            <person name="Koma T."/>
            <person name="Yasuda S.P."/>
            <person name="Arikawa J."/>
        </authorList>
    </citation>
    <scope>SUBCELLULAR LOCATION (GLYCOPROTEIN N)</scope>
    <scope>SUBCELLULAR LOCATION (GLYCOPROTEIN C)</scope>
</reference>
<reference key="11">
    <citation type="journal article" date="2017" name="J. Virol.">
        <title>Structural Transitions of the Conserved and Metastable Hantaviral Glycoprotein Envelope.</title>
        <authorList>
            <person name="Rissanen I."/>
            <person name="Stass R."/>
            <person name="Zeltina A."/>
            <person name="Li S."/>
            <person name="Hepojoki J."/>
            <person name="Harlos K."/>
            <person name="Gilbert R.J.C."/>
            <person name="Huiskonen J.T."/>
            <person name="Bowden T.A."/>
        </authorList>
    </citation>
    <scope>SUBUNIT (GLYCOPROTEIN C)</scope>
</reference>
<reference key="12">
    <citation type="journal article" date="2019" name="Cell Rep.">
        <title>The Glycoprotein and Nucleocapsid Protein of Hantaviruses Manipulate Autophagy Flux to Restrain Host Innate Immune Responses.</title>
        <authorList>
            <person name="Wang K."/>
            <person name="Ma H."/>
            <person name="Liu H."/>
            <person name="Ye W."/>
            <person name="Li Z."/>
            <person name="Cheng L."/>
            <person name="Zhang L."/>
            <person name="Lei Y."/>
            <person name="Shen L."/>
            <person name="Zhang F."/>
        </authorList>
    </citation>
    <scope>FUNCTION (GLYCOPROTEIN N)</scope>
    <scope>INTERACTION WITH HOST TUFM (GLYCOPROTEIN N)</scope>
    <scope>SUBCELLULAR LOCATION (GLYCOPROTEIN N)</scope>
    <scope>INTERACTION WITH HOST MAP1LC3B (GLYCOPROTEIN N)</scope>
    <scope>DOMAIN (GLYCOPROTEIN N)</scope>
    <scope>MUTAGENESIS OF TYR-615 AND LEU-618</scope>
    <source>
        <strain>76-118</strain>
    </source>
</reference>
<reference key="13">
    <citation type="journal article" date="2019" name="Virus Res.">
        <title>Analysis of the integrin beta3 receptor for pathogenic orthohantaviruses in rodent host species.</title>
        <authorList>
            <person name="Mueller A."/>
            <person name="Baum ann A."/>
            <person name="Essbauer S."/>
            <person name="Radosa L."/>
            <person name="Krueger D.H."/>
            <person name="Witkowski P.T."/>
            <person name="Zeier M."/>
            <person name="Krautkraemer E."/>
        </authorList>
    </citation>
    <scope>FUNCTION (GLYCOPROTEIN N)</scope>
    <scope>FUNCTION (GLYCOPROTEIN C)</scope>
</reference>
<reference key="14">
    <citation type="journal article" date="2011" name="J. Virol.">
        <title>Structural studies of Hantaan virus.</title>
        <authorList>
            <person name="Battisti A.J."/>
            <person name="Chu Y.K."/>
            <person name="Chipman P.R."/>
            <person name="Kaufmann B."/>
            <person name="Jonsson C.B."/>
            <person name="Rossmann M.G."/>
        </authorList>
    </citation>
    <scope>STRUCTURE BY ELECTRON MICROSCOPY (25 ANGSTROMS)</scope>
    <scope>SUBUNIT (GLYCOPROTEIN N)</scope>
    <scope>SUBUNIT (GLYCOPROTEIN C)</scope>
    <scope>SUBCELLULAR LOCATION (GLYCOPROTEIN N)</scope>
    <scope>SUBCELLULAR LOCATION (GLYCOPROTEIN C)</scope>
</reference>
<reference evidence="23 24 25 26 27 28 29" key="15">
    <citation type="journal article" date="2016" name="PLoS Pathog.">
        <title>Mechanistic Insight into Bunyavirus-Induced Membrane Fusion from Structure-Function Analyses of the Hantavirus Envelope Glycoprotein Gc.</title>
        <authorList>
            <person name="Guardado-Calvo P."/>
            <person name="Bignon E.A."/>
            <person name="Stettner E."/>
            <person name="Jeffers S.A."/>
            <person name="Perez-Vargas J."/>
            <person name="Pehau-Arnaudet G."/>
            <person name="Tortorici M.A."/>
            <person name="Jestin J.L."/>
            <person name="England P."/>
            <person name="Tischler N.D."/>
            <person name="Rey F.A."/>
        </authorList>
    </citation>
    <scope>X-RAY CRYSTALLOGRAPHY (1.40 ANGSTROMS) OF 649-1105</scope>
    <scope>GLYCOSYLATION AT ASN-928</scope>
    <scope>DISULFIDE BOND</scope>
    <scope>FUNCTION (GLYCOPROTEIN C)</scope>
    <scope>SUBUNIT (GLYCOPROTEIN C)</scope>
</reference>
<reference evidence="30" key="16">
    <citation type="journal article" date="2020" name="Cell">
        <title>The Hantavirus Surface Glycoprotein Lattice and Its Fusion Control Mechanism.</title>
        <authorList>
            <person name="Serris A."/>
            <person name="Stass R."/>
            <person name="Bignon E.A."/>
            <person name="Muena N.A."/>
            <person name="Manuguerra J.C."/>
            <person name="Jangra R.K."/>
            <person name="Li S."/>
            <person name="Chandran K."/>
            <person name="Tischler N.D."/>
            <person name="Huiskonen J.T."/>
            <person name="Rey F.A."/>
            <person name="Guardado-Calvo P."/>
        </authorList>
    </citation>
    <scope>X-RAY CRYSTALLOGRAPHY (1.94 ANGSTROMS) OF 20-371</scope>
    <scope>SUBUNIT (GLYCOPROTEIN N)</scope>
    <scope>SUBUNIT (GLYCOPROTEIN C)</scope>
    <scope>FUNCTION (GLYCOPROTEIN C)</scope>
</reference>
<comment type="function">
    <molecule>Glycoprotein N</molecule>
    <text evidence="2 8 10 11 12 17 18">Forms homotetramers with glycoprotein C at the surface of the virion. Attaches the virion to host cell receptors including integrin ITGAV/ITGB3 (PubMed:15657120, PubMed:16310165, PubMed:31054291). This attachment induces virion internalization predominantly through clathrin-dependent endocytosis (PubMed:11886265). May also bind to host C1QBP for virus entry into the host cell (PubMed:18834607). Mediates the assembly and budding of infectious virus particles through its interaction with the nucleocapsid protein and the viral genome (By similarity). May dysregulate normal immune and endothelial cell responses through an ITAM motif. Translocates to mitochondria, binds to host TUFM and recruits MAP1LC3B (PubMed:31091447). These interactions induce mitochondrial autophagy and therefore destruction of host MAVS leading to inhibition of type I interferon (IFN) responses (PubMed:31091447). Concomitant breakdown of glycoprotein N is apparently prevented by the nucleoprotein that may inhibit Gn-stimulated autophagosome-lysosome fusion (PubMed:31091447). Interacts with the viral genomic RNA (By similarity).</text>
</comment>
<comment type="function">
    <molecule>Glycoprotein C</molecule>
    <text evidence="9 10 11 12 15 17 19 21">Homodimer. Homotetramer; forms heterotetrameric Gn-Gc spikes in the pre-fusion conformation (Probable). Attaches the virion to host cell receptors including integrin ITGAV/ITGB3 (PubMed:15657120, PubMed:16310165, PubMed:31054291). This attachment induces virion internalization predominantly through clathrin-dependent endocytosis (PubMed:16310165). May also bind to host C1QBP for virus entry into the host cell (PubMed:18834607). Class II fusion protein that promotes fusion of viral membrane with host endosomal membrane after endocytosis of the virion (PubMed:15367644, PubMed:27783711, PubMed:32937107).</text>
</comment>
<comment type="subunit">
    <molecule>Glycoprotein N</molecule>
    <text evidence="1 18 19 21">Homodimer (Probable) (PubMed:32937107). Homotetramer; forms heterotetrameric Gn-Gc spikes in the pre-fusion conformation (Probable) (PubMed:32937107). Interacts (via C-terminus) with the nucleoprotein (By similarity). Interacts with host TUFM; this interaction contributes to the virus-induced degradation of mitochondria by autophagy, which leads to degradation of host MAVS and inhibition of type I interferon (IFN) responses (PubMed:31091447). Interacts with host MAP1LC3B; this interaction contributes to the virus-induced degradation of mitochondria by autophagy, which leads to degradation of host MAVS and inhibition of type I interferon (IFN) responses (PubMed:31091447).</text>
</comment>
<comment type="subunit">
    <molecule>Glycoprotein C</molecule>
    <text evidence="2 13 15 16 19">Homotetramer; forms heterotetrameric Gn-Gc spikes in the pre-fusion conformation (PubMed:21068243, PubMed:28835498, PubMed:32937107). Homotrimer; forms homotrimer in the post-fusion conformation at acidic pH (PubMed:27783711, PubMed:28835498). Interacts (via C-terminus) with the nucleoprotein (By similarity).</text>
</comment>
<comment type="subcellular location">
    <molecule>Glycoprotein N</molecule>
    <subcellularLocation>
        <location evidence="13">Virion membrane</location>
        <topology evidence="20">Multi-pass membrane protein</topology>
    </subcellularLocation>
    <subcellularLocation>
        <location evidence="9">Host cell surface</location>
    </subcellularLocation>
    <subcellularLocation>
        <location evidence="14">Host Golgi apparatus membrane</location>
        <topology evidence="20">Multi-pass membrane protein</topology>
    </subcellularLocation>
    <subcellularLocation>
        <location evidence="20">Host endoplasmic reticulum membrane</location>
        <topology evidence="20">Multi-pass membrane protein</topology>
    </subcellularLocation>
    <subcellularLocation>
        <location evidence="18">Host mitochondrion</location>
    </subcellularLocation>
    <text evidence="2">Interaction between glycoprotein N and glycoprotein C is essential for proper targeting of glycoprotein N to the host Golgi complex, where virion budding occurs.</text>
</comment>
<comment type="subcellular location">
    <molecule>Glycoprotein C</molecule>
    <subcellularLocation>
        <location evidence="13">Virion membrane</location>
        <topology evidence="20">Single-pass type I membrane protein</topology>
    </subcellularLocation>
    <subcellularLocation>
        <location evidence="9">Host cell surface</location>
    </subcellularLocation>
    <subcellularLocation>
        <location evidence="14">Host Golgi apparatus membrane</location>
        <topology evidence="20">Single-pass type I membrane protein</topology>
    </subcellularLocation>
    <subcellularLocation>
        <location evidence="20">Host endoplasmic reticulum membrane</location>
        <topology evidence="20">Single-pass type I membrane protein</topology>
    </subcellularLocation>
    <text evidence="14 20">Budding probably takes place at the host Golgi (Probable). Glycoprotein C cytoplasmic tail is important for efficient Golgi localization (PubMed:24070985).</text>
</comment>
<comment type="domain">
    <molecule>Glycoprotein N</molecule>
    <text evidence="1 2 4 18">The YxxL motif at the C-terminus is indispensable for the interaction with MAP1LC3B and for the Gn-mediated induction of mitochondrial autophagy (PubMed:31091447). The cytoplasmic tail is involved in the inhibition of the host innate immune response (By similarity). The C-terminus of the cytoplasmic tail is involved in binding to the viral genome and the nucleocapsid (By similarity). Contains 2 contiguous zinc-fingers (By similarity).</text>
</comment>
<comment type="domain">
    <molecule>Glycoprotein C</molecule>
    <text evidence="2">The C-terminus is necessary for proper localization in the Golgi (By similarity). The cytoplasmic tail is involved in binding to the nucleocapsid (By similarity).</text>
</comment>
<comment type="PTM">
    <molecule>Envelopment polyprotein</molecule>
    <text evidence="7">Specific enzymatic cleavage in vivo yield the mature proteins Glycoprotein N and Glycoprotein C.</text>
</comment>
<comment type="similarity">
    <text evidence="20">Belongs to the hantavirus envelope glycoprotein family.</text>
</comment>
<name>GP_HANTV</name>
<dbReference type="EMBL" id="M14627">
    <property type="protein sequence ID" value="AAA43836.1"/>
    <property type="molecule type" value="Genomic_RNA"/>
</dbReference>
<dbReference type="EMBL" id="Y00386">
    <property type="protein sequence ID" value="CAA68456.1"/>
    <property type="molecule type" value="mRNA"/>
</dbReference>
<dbReference type="PIR" id="A26348">
    <property type="entry name" value="GNVUHV"/>
</dbReference>
<dbReference type="PIR" id="A29382">
    <property type="entry name" value="GNVUH7"/>
</dbReference>
<dbReference type="PDB" id="5LJX">
    <property type="method" value="X-ray"/>
    <property type="resolution" value="1.40 A"/>
    <property type="chains" value="A=649-1105"/>
</dbReference>
<dbReference type="PDB" id="5LJY">
    <property type="method" value="X-ray"/>
    <property type="resolution" value="3.00 A"/>
    <property type="chains" value="A=649-1105"/>
</dbReference>
<dbReference type="PDB" id="5LJZ">
    <property type="method" value="X-ray"/>
    <property type="resolution" value="1.60 A"/>
    <property type="chains" value="A=649-1105"/>
</dbReference>
<dbReference type="PDB" id="5LK0">
    <property type="method" value="X-ray"/>
    <property type="resolution" value="1.80 A"/>
    <property type="chains" value="A=649-1105"/>
</dbReference>
<dbReference type="PDB" id="5LK1">
    <property type="method" value="X-ray"/>
    <property type="resolution" value="1.70 A"/>
    <property type="chains" value="A=649-1105"/>
</dbReference>
<dbReference type="PDB" id="5LK2">
    <property type="method" value="X-ray"/>
    <property type="resolution" value="1.60 A"/>
    <property type="chains" value="A=649-1105"/>
</dbReference>
<dbReference type="PDB" id="5LK3">
    <property type="method" value="X-ray"/>
    <property type="resolution" value="1.50 A"/>
    <property type="chains" value="A=649-1105"/>
</dbReference>
<dbReference type="PDB" id="6Y6P">
    <property type="method" value="X-ray"/>
    <property type="resolution" value="1.94 A"/>
    <property type="chains" value="A=20-371"/>
</dbReference>
<dbReference type="PDBsum" id="5LJX"/>
<dbReference type="PDBsum" id="5LJY"/>
<dbReference type="PDBsum" id="5LJZ"/>
<dbReference type="PDBsum" id="5LK0"/>
<dbReference type="PDBsum" id="5LK1"/>
<dbReference type="PDBsum" id="5LK2"/>
<dbReference type="PDBsum" id="5LK3"/>
<dbReference type="PDBsum" id="6Y6P"/>
<dbReference type="SMR" id="P08668"/>
<dbReference type="TCDB" id="1.G.20.1.1">
    <property type="family name" value="the hantavirus gc envelope fusion glycoprotein (gc-efg) family"/>
</dbReference>
<dbReference type="GlyCosmos" id="P08668">
    <property type="glycosylation" value="5 sites, No reported glycans"/>
</dbReference>
<dbReference type="iPTMnet" id="P08668"/>
<dbReference type="ABCD" id="P08668">
    <property type="antibodies" value="2 sequenced antibodies"/>
</dbReference>
<dbReference type="KEGG" id="vg:2943079"/>
<dbReference type="Proteomes" id="UP000008627">
    <property type="component" value="Genome"/>
</dbReference>
<dbReference type="GO" id="GO:0044167">
    <property type="term" value="C:host cell endoplasmic reticulum membrane"/>
    <property type="evidence" value="ECO:0007669"/>
    <property type="project" value="UniProtKB-SubCell"/>
</dbReference>
<dbReference type="GO" id="GO:0044178">
    <property type="term" value="C:host cell Golgi membrane"/>
    <property type="evidence" value="ECO:0007669"/>
    <property type="project" value="UniProtKB-SubCell"/>
</dbReference>
<dbReference type="GO" id="GO:0033650">
    <property type="term" value="C:host cell mitochondrion"/>
    <property type="evidence" value="ECO:0007669"/>
    <property type="project" value="UniProtKB-SubCell"/>
</dbReference>
<dbReference type="GO" id="GO:0044228">
    <property type="term" value="C:host cell surface"/>
    <property type="evidence" value="ECO:0007669"/>
    <property type="project" value="UniProtKB-SubCell"/>
</dbReference>
<dbReference type="GO" id="GO:0016020">
    <property type="term" value="C:membrane"/>
    <property type="evidence" value="ECO:0007669"/>
    <property type="project" value="UniProtKB-KW"/>
</dbReference>
<dbReference type="GO" id="GO:0019031">
    <property type="term" value="C:viral envelope"/>
    <property type="evidence" value="ECO:0007669"/>
    <property type="project" value="UniProtKB-KW"/>
</dbReference>
<dbReference type="GO" id="GO:0055036">
    <property type="term" value="C:virion membrane"/>
    <property type="evidence" value="ECO:0007669"/>
    <property type="project" value="UniProtKB-SubCell"/>
</dbReference>
<dbReference type="GO" id="GO:0008270">
    <property type="term" value="F:zinc ion binding"/>
    <property type="evidence" value="ECO:0007669"/>
    <property type="project" value="UniProtKB-KW"/>
</dbReference>
<dbReference type="GO" id="GO:0075509">
    <property type="term" value="P:endocytosis involved in viral entry into host cell"/>
    <property type="evidence" value="ECO:0000314"/>
    <property type="project" value="UniProtKB"/>
</dbReference>
<dbReference type="GO" id="GO:0039654">
    <property type="term" value="P:fusion of virus membrane with host endosome membrane"/>
    <property type="evidence" value="ECO:0007669"/>
    <property type="project" value="UniProtKB-KW"/>
</dbReference>
<dbReference type="GO" id="GO:0007165">
    <property type="term" value="P:signal transduction"/>
    <property type="evidence" value="ECO:0007669"/>
    <property type="project" value="InterPro"/>
</dbReference>
<dbReference type="GO" id="GO:0039520">
    <property type="term" value="P:symbiont-mediated activation of host autophagy"/>
    <property type="evidence" value="ECO:0007669"/>
    <property type="project" value="UniProtKB-KW"/>
</dbReference>
<dbReference type="GO" id="GO:0140321">
    <property type="term" value="P:symbiont-mediated suppression of host autophagy"/>
    <property type="evidence" value="ECO:0000314"/>
    <property type="project" value="UniProtKB"/>
</dbReference>
<dbReference type="GO" id="GO:0039545">
    <property type="term" value="P:symbiont-mediated suppression of host cytoplasmic pattern recognition receptor signaling pathway via inhibition of MAVS activity"/>
    <property type="evidence" value="ECO:0000314"/>
    <property type="project" value="UniProtKB"/>
</dbReference>
<dbReference type="GO" id="GO:0039527">
    <property type="term" value="P:symbiont-mediated suppression of host TRAF-mediated signal transduction"/>
    <property type="evidence" value="ECO:0007669"/>
    <property type="project" value="UniProtKB-KW"/>
</dbReference>
<dbReference type="GO" id="GO:0019062">
    <property type="term" value="P:virion attachment to host cell"/>
    <property type="evidence" value="ECO:0007669"/>
    <property type="project" value="UniProtKB-KW"/>
</dbReference>
<dbReference type="Gene3D" id="1.10.8.1320">
    <property type="match status" value="1"/>
</dbReference>
<dbReference type="InterPro" id="IPR016402">
    <property type="entry name" value="Envelope_glycoprot_Hantavirus"/>
</dbReference>
<dbReference type="InterPro" id="IPR048791">
    <property type="entry name" value="Gc_C_bunya"/>
</dbReference>
<dbReference type="InterPro" id="IPR048790">
    <property type="entry name" value="Gn-B_hanta"/>
</dbReference>
<dbReference type="InterPro" id="IPR002532">
    <property type="entry name" value="Hanta_Gc_N"/>
</dbReference>
<dbReference type="InterPro" id="IPR002534">
    <property type="entry name" value="Hanta_Gn-H"/>
</dbReference>
<dbReference type="InterPro" id="IPR012316">
    <property type="entry name" value="ITAM_motif_hantavir-typ"/>
</dbReference>
<dbReference type="Pfam" id="PF20682">
    <property type="entry name" value="Hanta_Gc_C"/>
    <property type="match status" value="1"/>
</dbReference>
<dbReference type="Pfam" id="PF01561">
    <property type="entry name" value="Hanta_Gc_N"/>
    <property type="match status" value="1"/>
</dbReference>
<dbReference type="Pfam" id="PF20679">
    <property type="entry name" value="Hanta_Gn-B"/>
    <property type="match status" value="1"/>
</dbReference>
<dbReference type="Pfam" id="PF01567">
    <property type="entry name" value="Hanta_Gn-H"/>
    <property type="match status" value="1"/>
</dbReference>
<dbReference type="Pfam" id="PF10538">
    <property type="entry name" value="ITAM_Cys-rich"/>
    <property type="match status" value="1"/>
</dbReference>
<dbReference type="PIRSF" id="PIRSF003945">
    <property type="entry name" value="M_poly_HantaV"/>
    <property type="match status" value="1"/>
</dbReference>
<dbReference type="PROSITE" id="PS51056">
    <property type="entry name" value="ITAM_2"/>
    <property type="match status" value="1"/>
</dbReference>
<organism>
    <name type="scientific">Hantaan virus (strain 76-118)</name>
    <name type="common">Korean hemorrhagic fever virus</name>
    <dbReference type="NCBI Taxonomy" id="11602"/>
    <lineage>
        <taxon>Viruses</taxon>
        <taxon>Riboviria</taxon>
        <taxon>Orthornavirae</taxon>
        <taxon>Negarnaviricota</taxon>
        <taxon>Polyploviricotina</taxon>
        <taxon>Ellioviricetes</taxon>
        <taxon>Bunyavirales</taxon>
        <taxon>Hantaviridae</taxon>
        <taxon>Mammantavirinae</taxon>
        <taxon>Orthohantavirus</taxon>
        <taxon>Orthohantavirus hantanense</taxon>
    </lineage>
</organism>
<accession>P08668</accession>
<evidence type="ECO:0000250" key="1">
    <source>
        <dbReference type="UniProtKB" id="P0DTJ1"/>
    </source>
</evidence>
<evidence type="ECO:0000250" key="2">
    <source>
        <dbReference type="UniProtKB" id="P27312"/>
    </source>
</evidence>
<evidence type="ECO:0000250" key="3">
    <source>
        <dbReference type="UniProtKB" id="P41266"/>
    </source>
</evidence>
<evidence type="ECO:0000250" key="4">
    <source>
        <dbReference type="UniProtKB" id="Q9E006"/>
    </source>
</evidence>
<evidence type="ECO:0000255" key="5"/>
<evidence type="ECO:0000255" key="6">
    <source>
        <dbReference type="PROSITE-ProRule" id="PRU00379"/>
    </source>
</evidence>
<evidence type="ECO:0000269" key="7">
    <source>
    </source>
</evidence>
<evidence type="ECO:0000269" key="8">
    <source>
    </source>
</evidence>
<evidence type="ECO:0000269" key="9">
    <source>
    </source>
</evidence>
<evidence type="ECO:0000269" key="10">
    <source>
    </source>
</evidence>
<evidence type="ECO:0000269" key="11">
    <source>
    </source>
</evidence>
<evidence type="ECO:0000269" key="12">
    <source>
    </source>
</evidence>
<evidence type="ECO:0000269" key="13">
    <source>
    </source>
</evidence>
<evidence type="ECO:0000269" key="14">
    <source>
    </source>
</evidence>
<evidence type="ECO:0000269" key="15">
    <source>
    </source>
</evidence>
<evidence type="ECO:0000269" key="16">
    <source>
    </source>
</evidence>
<evidence type="ECO:0000269" key="17">
    <source>
    </source>
</evidence>
<evidence type="ECO:0000269" key="18">
    <source>
    </source>
</evidence>
<evidence type="ECO:0000269" key="19">
    <source>
    </source>
</evidence>
<evidence type="ECO:0000305" key="20"/>
<evidence type="ECO:0000305" key="21">
    <source>
    </source>
</evidence>
<evidence type="ECO:0000305" key="22">
    <source>
    </source>
</evidence>
<evidence type="ECO:0007744" key="23">
    <source>
        <dbReference type="PDB" id="5LJX"/>
    </source>
</evidence>
<evidence type="ECO:0007744" key="24">
    <source>
        <dbReference type="PDB" id="5LJY"/>
    </source>
</evidence>
<evidence type="ECO:0007744" key="25">
    <source>
        <dbReference type="PDB" id="5LJZ"/>
    </source>
</evidence>
<evidence type="ECO:0007744" key="26">
    <source>
        <dbReference type="PDB" id="5LK0"/>
    </source>
</evidence>
<evidence type="ECO:0007744" key="27">
    <source>
        <dbReference type="PDB" id="5LK1"/>
    </source>
</evidence>
<evidence type="ECO:0007744" key="28">
    <source>
        <dbReference type="PDB" id="5LK2"/>
    </source>
</evidence>
<evidence type="ECO:0007744" key="29">
    <source>
        <dbReference type="PDB" id="5LK3"/>
    </source>
</evidence>
<evidence type="ECO:0007744" key="30">
    <source>
        <dbReference type="PDB" id="6Y6P"/>
    </source>
</evidence>
<evidence type="ECO:0007829" key="31">
    <source>
        <dbReference type="PDB" id="5LJX"/>
    </source>
</evidence>
<evidence type="ECO:0007829" key="32">
    <source>
        <dbReference type="PDB" id="5LJY"/>
    </source>
</evidence>
<evidence type="ECO:0007829" key="33">
    <source>
        <dbReference type="PDB" id="5LJZ"/>
    </source>
</evidence>
<evidence type="ECO:0007829" key="34">
    <source>
        <dbReference type="PDB" id="5LK3"/>
    </source>
</evidence>
<evidence type="ECO:0007829" key="35">
    <source>
        <dbReference type="PDB" id="6Y6P"/>
    </source>
</evidence>
<sequence length="1135" mass="126421">MGIWKWLVMASLVWPVLTLRNVYDMKIECPHTVSFGENSVIGYVELPPVPLADTAQMVPESSCNMDNHQSLNTITKYTQVSWRGKADQSQSSQNSFETVSTEVDLKGTCVLKHKMVEESYRSRKSVTCYDLSCNSTYCKPTLYMIVPIHACNMMKSCLIALGPYRVQVVYERSYCMTGVLIEGKCFVPDQSVVSIIKHGIFDIASVHIVCFFVAVKGNTYKIFEQVKKSFESTCNDTENKVQGYYICIVGGNSAPIYVPTLDDFRSMEAFTGIFRSPHGEDHDLAGEEIASYSIVGPANAKVPHSASSDTLSLIAYSGIPSYSSLSILTSSTEAKHVFSPGLFPKLNHTNCDKSAIPLIWTGMIDLPGYYEAVHPCTVFCVLSGPGASCEAFSEGGIFNITSPMCLVSKQNRFRLTEQQVNFVCQRVDMDIVVYCNGQRKVILTKTLVIGQCIYTITSLFSLLPGVAHSIAVELCVPGFHGWATAALLVTFCFGWVLIPAITFIILTVLKFIANIFHTSNQENRLKSVLRKIKEEFEKTKGSMVCDVCKYECETYKELKAHGVSCPQSQCPYCFTHCEPTEAAFQAHYKVCQVTHRFRDDLKKTVTPQNFTPGCYRTLNLFRYKSRCYIFTMWIFLLVLESILWAASASETPLTPVWNDNAHGVGSVPMHTDLELDFSLTSSSKYTYRRKLTNPLEEAQSIDLHIEIEEQTIGVDVHALGHWFDGRLNLKTSFHCYGACTKYEYPWHTAKCHYERDYQYETSWGCNPSDCPGVGTGCTACGLYLDQLKPVGSAYKIITIRYSRRVCVQFGEENLCKIIDMNDCFVSRHVKVCIIGTVSKFSQGDTLLFFGPLEGGGLIFKHWCTSTCQFGDPGDIMSPRDKGFLCPEFPGSFRKKCNFATTPICEYDGNMVSGYKKVMATIDSFQSFNTSTMHFTDERIEWKDPDGMLRDHINILVTKDIDFDNLGENPCKIGLQTSSIEGAWGSGVGFTLTCLVSLTECPTFLTSIKACDKAICYGAESVTLTRGQNTVKVSGKGGHSGSTFRCCHGEDCSQIGLHAAAPHLDKVNGISEIENSKVYDDGAPQCGIKCWFVKSGEWISGIFSGNWIVLIVLCVFLLFSLVLLSILCPVRKHKKS</sequence>
<protein>
    <recommendedName>
        <fullName>Envelopment polyprotein</fullName>
    </recommendedName>
    <alternativeName>
        <fullName evidence="22">Glycoprotein precursor</fullName>
    </alternativeName>
    <alternativeName>
        <fullName>M polyprotein</fullName>
    </alternativeName>
    <component>
        <recommendedName>
            <fullName evidence="22">Glycoprotein N</fullName>
            <shortName>Gn</shortName>
        </recommendedName>
        <alternativeName>
            <fullName>Glycoprotein G1</fullName>
        </alternativeName>
    </component>
    <component>
        <recommendedName>
            <fullName evidence="22">Glycoprotein C</fullName>
            <shortName>Gc</shortName>
        </recommendedName>
        <alternativeName>
            <fullName>Glycoprotein G2</fullName>
        </alternativeName>
    </component>
</protein>
<keyword id="KW-0002">3D-structure</keyword>
<keyword id="KW-1072">Activation of host autophagy by virus</keyword>
<keyword id="KW-1015">Disulfide bond</keyword>
<keyword id="KW-1170">Fusion of virus membrane with host endosomal membrane</keyword>
<keyword id="KW-1168">Fusion of virus membrane with host membrane</keyword>
<keyword id="KW-0325">Glycoprotein</keyword>
<keyword id="KW-1038">Host endoplasmic reticulum</keyword>
<keyword id="KW-1040">Host Golgi apparatus</keyword>
<keyword id="KW-1043">Host membrane</keyword>
<keyword id="KW-1045">Host mitochondrion</keyword>
<keyword id="KW-0945">Host-virus interaction</keyword>
<keyword id="KW-1090">Inhibition of host innate immune response by virus</keyword>
<keyword id="KW-1097">Inhibition of host MAVS by virus</keyword>
<keyword id="KW-1113">Inhibition of host RLR pathway by virus</keyword>
<keyword id="KW-1110">Inhibition of host TRAFs by virus</keyword>
<keyword id="KW-0472">Membrane</keyword>
<keyword id="KW-0479">Metal-binding</keyword>
<keyword id="KW-1185">Reference proteome</keyword>
<keyword id="KW-0677">Repeat</keyword>
<keyword id="KW-0732">Signal</keyword>
<keyword id="KW-0812">Transmembrane</keyword>
<keyword id="KW-1133">Transmembrane helix</keyword>
<keyword id="KW-1161">Viral attachment to host cell</keyword>
<keyword id="KW-0261">Viral envelope protein</keyword>
<keyword id="KW-0899">Viral immunoevasion</keyword>
<keyword id="KW-1162">Viral penetration into host cytoplasm</keyword>
<keyword id="KW-0946">Virion</keyword>
<keyword id="KW-1164">Virus endocytosis by host</keyword>
<keyword id="KW-1160">Virus entry into host cell</keyword>
<keyword id="KW-0862">Zinc</keyword>
<keyword id="KW-0863">Zinc-finger</keyword>
<proteinExistence type="evidence at protein level"/>
<feature type="signal peptide" evidence="5">
    <location>
        <begin position="1"/>
        <end position="18"/>
    </location>
</feature>
<feature type="chain" id="PRO_0000036815" description="Envelopment polyprotein">
    <location>
        <begin position="19"/>
        <end position="1135"/>
    </location>
</feature>
<feature type="chain" id="PRO_0000036816" description="Glycoprotein N">
    <location>
        <begin position="19"/>
        <end position="648"/>
    </location>
</feature>
<feature type="chain" id="PRO_0000036817" description="Glycoprotein C">
    <location>
        <begin position="649"/>
        <end position="1135"/>
    </location>
</feature>
<feature type="topological domain" description="Lumenal" evidence="5">
    <location>
        <begin position="19"/>
        <end position="485"/>
    </location>
</feature>
<feature type="transmembrane region" description="Helical" evidence="5">
    <location>
        <begin position="486"/>
        <end position="506"/>
    </location>
</feature>
<feature type="topological domain" description="Cytoplasmic" evidence="5">
    <location>
        <begin position="507"/>
        <end position="627"/>
    </location>
</feature>
<feature type="transmembrane region" description="Helical" evidence="5">
    <location>
        <begin position="628"/>
        <end position="648"/>
    </location>
</feature>
<feature type="topological domain" description="Lumenal" evidence="5">
    <location>
        <begin position="649"/>
        <end position="1105"/>
    </location>
</feature>
<feature type="transmembrane region" description="Helical" evidence="5">
    <location>
        <begin position="1106"/>
        <end position="1126"/>
    </location>
</feature>
<feature type="topological domain" description="Cytoplasmic" evidence="5">
    <location>
        <begin position="1127"/>
        <end position="1135"/>
    </location>
</feature>
<feature type="domain" description="ITAM" evidence="6">
    <location>
        <begin position="611"/>
        <end position="634"/>
    </location>
</feature>
<feature type="zinc finger region" description="CCHC-type 1" evidence="4">
    <location>
        <begin position="545"/>
        <end position="565"/>
    </location>
</feature>
<feature type="zinc finger region" description="CCHC-type 2" evidence="4">
    <location>
        <begin position="570"/>
        <end position="591"/>
    </location>
</feature>
<feature type="region of interest" description="Binding to the ribonucleoprotein" evidence="4">
    <location>
        <begin position="516"/>
        <end position="533"/>
    </location>
</feature>
<feature type="region of interest" description="Binding to the ribonucleoprotein" evidence="2">
    <location>
        <begin position="588"/>
        <end position="605"/>
    </location>
</feature>
<feature type="region of interest" description="Binding to the ribonucleoprotein" evidence="4">
    <location>
        <begin position="592"/>
        <end position="603"/>
    </location>
</feature>
<feature type="region of interest" description="Binding to the ribonucleoprotein" evidence="2">
    <location>
        <begin position="611"/>
        <end position="625"/>
    </location>
</feature>
<feature type="region of interest" description="Fusion loop" evidence="3">
    <location>
        <begin position="757"/>
        <end position="777"/>
    </location>
</feature>
<feature type="region of interest" description="Binding to the ribonucleoprotein" evidence="2">
    <location>
        <begin position="1122"/>
        <end position="1135"/>
    </location>
</feature>
<feature type="short sequence motif" description="YxxL" evidence="18">
    <location>
        <begin position="615"/>
        <end position="618"/>
    </location>
</feature>
<feature type="site" description="Cleavage; by host signal peptidase" evidence="7">
    <location>
        <begin position="648"/>
        <end position="649"/>
    </location>
</feature>
<feature type="glycosylation site" description="N-linked (GlcNAc...) asparagine; by host" evidence="5">
    <location>
        <position position="134"/>
    </location>
</feature>
<feature type="glycosylation site" description="N-linked (GlcNAc...) asparagine; by host" evidence="5">
    <location>
        <position position="235"/>
    </location>
</feature>
<feature type="glycosylation site" description="N-linked (GlcNAc...) asparagine; by host" evidence="5">
    <location>
        <position position="347"/>
    </location>
</feature>
<feature type="glycosylation site" description="N-linked (GlcNAc...) asparagine; by host" evidence="5">
    <location>
        <position position="399"/>
    </location>
</feature>
<feature type="glycosylation site" description="N-linked (GlcNAc...) asparagine; by host" evidence="15">
    <location>
        <position position="928"/>
    </location>
</feature>
<feature type="disulfide bond" evidence="4">
    <location>
        <begin position="29"/>
        <end position="151"/>
    </location>
</feature>
<feature type="disulfide bond" evidence="4">
    <location>
        <begin position="63"/>
        <end position="157"/>
    </location>
</feature>
<feature type="disulfide bond" evidence="4">
    <location>
        <begin position="109"/>
        <end position="128"/>
    </location>
</feature>
<feature type="disulfide bond" evidence="4">
    <location>
        <begin position="133"/>
        <end position="138"/>
    </location>
</feature>
<feature type="disulfide bond" evidence="4">
    <location>
        <begin position="175"/>
        <end position="185"/>
    </location>
</feature>
<feature type="disulfide bond" evidence="4">
    <location>
        <begin position="210"/>
        <end position="247"/>
    </location>
</feature>
<feature type="disulfide bond" evidence="4">
    <location>
        <begin position="234"/>
        <end position="351"/>
    </location>
</feature>
<feature type="disulfide bond" evidence="4">
    <location>
        <begin position="376"/>
        <end position="435"/>
    </location>
</feature>
<feature type="disulfide bond" evidence="4">
    <location>
        <begin position="380"/>
        <end position="389"/>
    </location>
</feature>
<feature type="disulfide bond" evidence="4">
    <location>
        <begin position="405"/>
        <end position="424"/>
    </location>
</feature>
<feature type="disulfide bond" evidence="4">
    <location>
        <begin position="452"/>
        <end position="475"/>
    </location>
</feature>
<feature type="disulfide bond">
    <location>
        <begin position="735"/>
        <end position="770"/>
    </location>
</feature>
<feature type="disulfide bond">
    <location>
        <begin position="739"/>
        <end position="777"/>
    </location>
</feature>
<feature type="disulfide bond">
    <location>
        <begin position="751"/>
        <end position="885"/>
    </location>
</feature>
<feature type="disulfide bond">
    <location>
        <begin position="765"/>
        <end position="896"/>
    </location>
</feature>
<feature type="disulfide bond">
    <location>
        <begin position="780"/>
        <end position="904"/>
    </location>
</feature>
<feature type="disulfide bond">
    <location>
        <begin position="806"/>
        <end position="815"/>
    </location>
</feature>
<feature type="disulfide bond">
    <location>
        <begin position="823"/>
        <end position="832"/>
    </location>
</feature>
<feature type="disulfide bond">
    <location>
        <begin position="863"/>
        <end position="867"/>
    </location>
</feature>
<feature type="disulfide bond">
    <location>
        <begin position="970"/>
        <end position="1000"/>
    </location>
</feature>
<feature type="disulfide bond">
    <location>
        <begin position="993"/>
        <end position="1045"/>
    </location>
</feature>
<feature type="disulfide bond">
    <location>
        <begin position="1010"/>
        <end position="1015"/>
    </location>
</feature>
<feature type="disulfide bond">
    <location>
        <begin position="1046"/>
        <end position="1051"/>
    </location>
</feature>
<feature type="disulfide bond" evidence="4">
    <location>
        <begin position="1085"/>
        <end position="1089"/>
    </location>
</feature>
<feature type="mutagenesis site" description="Complete loss of interaction with host MAP1LC3B." evidence="18">
    <original>Y</original>
    <variation>A</variation>
    <location>
        <position position="615"/>
    </location>
</feature>
<feature type="mutagenesis site" description="Complete loss of interaction with host MAP1LC3B." evidence="18">
    <original>L</original>
    <variation>A</variation>
    <location>
        <position position="618"/>
    </location>
</feature>
<feature type="sequence conflict" description="In Ref. 2; CAA68456." evidence="20" ref="2">
    <original>E</original>
    <variation>G</variation>
    <location>
        <position position="37"/>
    </location>
</feature>
<feature type="sequence conflict" description="In Ref. 2; CAA68456." evidence="20" ref="2">
    <original>N</original>
    <variation>S</variation>
    <location>
        <position position="64"/>
    </location>
</feature>
<feature type="sequence conflict" description="In Ref. 2; CAA68456." evidence="20" ref="2">
    <original>S</original>
    <variation>T</variation>
    <location>
        <position position="173"/>
    </location>
</feature>
<feature type="strand" evidence="35">
    <location>
        <begin position="22"/>
        <end position="29"/>
    </location>
</feature>
<feature type="strand" evidence="35">
    <location>
        <begin position="39"/>
        <end position="45"/>
    </location>
</feature>
<feature type="helix" evidence="35">
    <location>
        <begin position="51"/>
        <end position="56"/>
    </location>
</feature>
<feature type="strand" evidence="35">
    <location>
        <begin position="64"/>
        <end position="66"/>
    </location>
</feature>
<feature type="helix" evidence="35">
    <location>
        <begin position="70"/>
        <end position="72"/>
    </location>
</feature>
<feature type="strand" evidence="35">
    <location>
        <begin position="73"/>
        <end position="81"/>
    </location>
</feature>
<feature type="strand" evidence="35">
    <location>
        <begin position="99"/>
        <end position="109"/>
    </location>
</feature>
<feature type="helix" evidence="35">
    <location>
        <begin position="115"/>
        <end position="122"/>
    </location>
</feature>
<feature type="strand" evidence="35">
    <location>
        <begin position="126"/>
        <end position="133"/>
    </location>
</feature>
<feature type="strand" evidence="35">
    <location>
        <begin position="135"/>
        <end position="147"/>
    </location>
</feature>
<feature type="helix" evidence="35">
    <location>
        <begin position="148"/>
        <end position="152"/>
    </location>
</feature>
<feature type="strand" evidence="35">
    <location>
        <begin position="155"/>
        <end position="161"/>
    </location>
</feature>
<feature type="strand" evidence="35">
    <location>
        <begin position="164"/>
        <end position="172"/>
    </location>
</feature>
<feature type="strand" evidence="35">
    <location>
        <begin position="174"/>
        <end position="181"/>
    </location>
</feature>
<feature type="strand" evidence="35">
    <location>
        <begin position="184"/>
        <end position="188"/>
    </location>
</feature>
<feature type="strand" evidence="35">
    <location>
        <begin position="202"/>
        <end position="214"/>
    </location>
</feature>
<feature type="helix" evidence="35">
    <location>
        <begin position="222"/>
        <end position="230"/>
    </location>
</feature>
<feature type="helix" evidence="35">
    <location>
        <begin position="237"/>
        <end position="239"/>
    </location>
</feature>
<feature type="strand" evidence="35">
    <location>
        <begin position="243"/>
        <end position="249"/>
    </location>
</feature>
<feature type="strand" evidence="35">
    <location>
        <begin position="252"/>
        <end position="254"/>
    </location>
</feature>
<feature type="strand" evidence="35">
    <location>
        <begin position="256"/>
        <end position="259"/>
    </location>
</feature>
<feature type="helix" evidence="35">
    <location>
        <begin position="264"/>
        <end position="275"/>
    </location>
</feature>
<feature type="strand" evidence="35">
    <location>
        <begin position="291"/>
        <end position="300"/>
    </location>
</feature>
<feature type="strand" evidence="35">
    <location>
        <begin position="311"/>
        <end position="319"/>
    </location>
</feature>
<feature type="strand" evidence="35">
    <location>
        <begin position="325"/>
        <end position="328"/>
    </location>
</feature>
<feature type="strand" evidence="35">
    <location>
        <begin position="336"/>
        <end position="338"/>
    </location>
</feature>
<feature type="strand" evidence="35">
    <location>
        <begin position="342"/>
        <end position="344"/>
    </location>
</feature>
<feature type="strand" evidence="35">
    <location>
        <begin position="355"/>
        <end position="370"/>
    </location>
</feature>
<feature type="strand" evidence="31">
    <location>
        <begin position="663"/>
        <end position="665"/>
    </location>
</feature>
<feature type="helix" evidence="31">
    <location>
        <begin position="668"/>
        <end position="670"/>
    </location>
</feature>
<feature type="strand" evidence="31">
    <location>
        <begin position="673"/>
        <end position="680"/>
    </location>
</feature>
<feature type="strand" evidence="31">
    <location>
        <begin position="685"/>
        <end position="692"/>
    </location>
</feature>
<feature type="strand" evidence="34">
    <location>
        <begin position="694"/>
        <end position="698"/>
    </location>
</feature>
<feature type="strand" evidence="31">
    <location>
        <begin position="700"/>
        <end position="707"/>
    </location>
</feature>
<feature type="strand" evidence="31">
    <location>
        <begin position="711"/>
        <end position="732"/>
    </location>
</feature>
<feature type="helix" evidence="33">
    <location>
        <begin position="739"/>
        <end position="741"/>
    </location>
</feature>
<feature type="turn" evidence="31">
    <location>
        <begin position="745"/>
        <end position="748"/>
    </location>
</feature>
<feature type="strand" evidence="31">
    <location>
        <begin position="750"/>
        <end position="756"/>
    </location>
</feature>
<feature type="helix" evidence="33">
    <location>
        <begin position="763"/>
        <end position="765"/>
    </location>
</feature>
<feature type="strand" evidence="31">
    <location>
        <begin position="779"/>
        <end position="809"/>
    </location>
</feature>
<feature type="strand" evidence="31">
    <location>
        <begin position="812"/>
        <end position="819"/>
    </location>
</feature>
<feature type="strand" evidence="31">
    <location>
        <begin position="823"/>
        <end position="825"/>
    </location>
</feature>
<feature type="strand" evidence="31">
    <location>
        <begin position="827"/>
        <end position="834"/>
    </location>
</feature>
<feature type="strand" evidence="31">
    <location>
        <begin position="845"/>
        <end position="848"/>
    </location>
</feature>
<feature type="strand" evidence="31">
    <location>
        <begin position="850"/>
        <end position="860"/>
    </location>
</feature>
<feature type="strand" evidence="31">
    <location>
        <begin position="875"/>
        <end position="877"/>
    </location>
</feature>
<feature type="turn" evidence="32">
    <location>
        <begin position="878"/>
        <end position="881"/>
    </location>
</feature>
<feature type="strand" evidence="31">
    <location>
        <begin position="892"/>
        <end position="895"/>
    </location>
</feature>
<feature type="strand" evidence="32">
    <location>
        <begin position="898"/>
        <end position="900"/>
    </location>
</feature>
<feature type="strand" evidence="31">
    <location>
        <begin position="903"/>
        <end position="906"/>
    </location>
</feature>
<feature type="helix" evidence="31">
    <location>
        <begin position="913"/>
        <end position="918"/>
    </location>
</feature>
<feature type="helix" evidence="31">
    <location>
        <begin position="919"/>
        <end position="923"/>
    </location>
</feature>
<feature type="strand" evidence="31">
    <location>
        <begin position="924"/>
        <end position="931"/>
    </location>
</feature>
<feature type="strand" evidence="31">
    <location>
        <begin position="933"/>
        <end position="935"/>
    </location>
</feature>
<feature type="strand" evidence="31">
    <location>
        <begin position="938"/>
        <end position="941"/>
    </location>
</feature>
<feature type="strand" evidence="31">
    <location>
        <begin position="949"/>
        <end position="956"/>
    </location>
</feature>
<feature type="strand" evidence="31">
    <location>
        <begin position="958"/>
        <end position="960"/>
    </location>
</feature>
<feature type="helix" evidence="32">
    <location>
        <begin position="962"/>
        <end position="965"/>
    </location>
</feature>
<feature type="strand" evidence="31">
    <location>
        <begin position="971"/>
        <end position="984"/>
    </location>
</feature>
<feature type="strand" evidence="31">
    <location>
        <begin position="989"/>
        <end position="1011"/>
    </location>
</feature>
<feature type="strand" evidence="31">
    <location>
        <begin position="1014"/>
        <end position="1034"/>
    </location>
</feature>
<feature type="strand" evidence="31">
    <location>
        <begin position="1043"/>
        <end position="1047"/>
    </location>
</feature>